<reference key="1">
    <citation type="journal article" date="2007" name="J. Bacteriol.">
        <title>Whole-genome analysis of the methyl tert-butyl ether-degrading beta-proteobacterium Methylibium petroleiphilum PM1.</title>
        <authorList>
            <person name="Kane S.R."/>
            <person name="Chakicherla A.Y."/>
            <person name="Chain P.S.G."/>
            <person name="Schmidt R."/>
            <person name="Shin M.W."/>
            <person name="Legler T.C."/>
            <person name="Scow K.M."/>
            <person name="Larimer F.W."/>
            <person name="Lucas S.M."/>
            <person name="Richardson P.M."/>
            <person name="Hristova K.R."/>
        </authorList>
    </citation>
    <scope>NUCLEOTIDE SEQUENCE [LARGE SCALE GENOMIC DNA]</scope>
    <source>
        <strain>ATCC BAA-1232 / LMG 22953 / PM1</strain>
    </source>
</reference>
<protein>
    <recommendedName>
        <fullName evidence="1">Large ribosomal subunit protein bL28</fullName>
    </recommendedName>
    <alternativeName>
        <fullName evidence="2">50S ribosomal protein L28</fullName>
    </alternativeName>
</protein>
<proteinExistence type="inferred from homology"/>
<dbReference type="EMBL" id="CP000555">
    <property type="protein sequence ID" value="ABM94078.1"/>
    <property type="molecule type" value="Genomic_DNA"/>
</dbReference>
<dbReference type="RefSeq" id="WP_011828715.1">
    <property type="nucleotide sequence ID" value="NC_008825.1"/>
</dbReference>
<dbReference type="SMR" id="A2SET9"/>
<dbReference type="STRING" id="420662.Mpe_A1117"/>
<dbReference type="KEGG" id="mpt:Mpe_A1117"/>
<dbReference type="eggNOG" id="COG0227">
    <property type="taxonomic scope" value="Bacteria"/>
</dbReference>
<dbReference type="HOGENOM" id="CLU_064548_3_1_4"/>
<dbReference type="Proteomes" id="UP000000366">
    <property type="component" value="Chromosome"/>
</dbReference>
<dbReference type="GO" id="GO:0022625">
    <property type="term" value="C:cytosolic large ribosomal subunit"/>
    <property type="evidence" value="ECO:0007669"/>
    <property type="project" value="TreeGrafter"/>
</dbReference>
<dbReference type="GO" id="GO:0003735">
    <property type="term" value="F:structural constituent of ribosome"/>
    <property type="evidence" value="ECO:0007669"/>
    <property type="project" value="InterPro"/>
</dbReference>
<dbReference type="GO" id="GO:0006412">
    <property type="term" value="P:translation"/>
    <property type="evidence" value="ECO:0007669"/>
    <property type="project" value="UniProtKB-UniRule"/>
</dbReference>
<dbReference type="FunFam" id="2.30.170.40:FF:000001">
    <property type="entry name" value="50S ribosomal protein L28"/>
    <property type="match status" value="1"/>
</dbReference>
<dbReference type="Gene3D" id="2.30.170.40">
    <property type="entry name" value="Ribosomal protein L28/L24"/>
    <property type="match status" value="1"/>
</dbReference>
<dbReference type="HAMAP" id="MF_00373">
    <property type="entry name" value="Ribosomal_bL28"/>
    <property type="match status" value="1"/>
</dbReference>
<dbReference type="InterPro" id="IPR026569">
    <property type="entry name" value="Ribosomal_bL28"/>
</dbReference>
<dbReference type="InterPro" id="IPR034704">
    <property type="entry name" value="Ribosomal_bL28/bL31-like_sf"/>
</dbReference>
<dbReference type="InterPro" id="IPR001383">
    <property type="entry name" value="Ribosomal_bL28_bact-type"/>
</dbReference>
<dbReference type="InterPro" id="IPR037147">
    <property type="entry name" value="Ribosomal_bL28_sf"/>
</dbReference>
<dbReference type="NCBIfam" id="TIGR00009">
    <property type="entry name" value="L28"/>
    <property type="match status" value="1"/>
</dbReference>
<dbReference type="PANTHER" id="PTHR13528">
    <property type="entry name" value="39S RIBOSOMAL PROTEIN L28, MITOCHONDRIAL"/>
    <property type="match status" value="1"/>
</dbReference>
<dbReference type="PANTHER" id="PTHR13528:SF2">
    <property type="entry name" value="LARGE RIBOSOMAL SUBUNIT PROTEIN BL28M"/>
    <property type="match status" value="1"/>
</dbReference>
<dbReference type="Pfam" id="PF00830">
    <property type="entry name" value="Ribosomal_L28"/>
    <property type="match status" value="1"/>
</dbReference>
<dbReference type="SUPFAM" id="SSF143800">
    <property type="entry name" value="L28p-like"/>
    <property type="match status" value="1"/>
</dbReference>
<name>RL28_METPP</name>
<accession>A2SET9</accession>
<keyword id="KW-1185">Reference proteome</keyword>
<keyword id="KW-0687">Ribonucleoprotein</keyword>
<keyword id="KW-0689">Ribosomal protein</keyword>
<comment type="similarity">
    <text evidence="1">Belongs to the bacterial ribosomal protein bL28 family.</text>
</comment>
<organism>
    <name type="scientific">Methylibium petroleiphilum (strain ATCC BAA-1232 / LMG 22953 / PM1)</name>
    <dbReference type="NCBI Taxonomy" id="420662"/>
    <lineage>
        <taxon>Bacteria</taxon>
        <taxon>Pseudomonadati</taxon>
        <taxon>Pseudomonadota</taxon>
        <taxon>Betaproteobacteria</taxon>
        <taxon>Burkholderiales</taxon>
        <taxon>Sphaerotilaceae</taxon>
        <taxon>Methylibium</taxon>
    </lineage>
</organism>
<feature type="chain" id="PRO_1000007277" description="Large ribosomal subunit protein bL28">
    <location>
        <begin position="1"/>
        <end position="77"/>
    </location>
</feature>
<gene>
    <name evidence="1" type="primary">rpmB</name>
    <name type="ordered locus">Mpe_A1117</name>
</gene>
<sequence length="77" mass="8920">MARVCQVTGKGPMVGNNVSHANNKTKRRFLPNLQYRRFWLETENRWVRLRVTNAALRLIDKVGIEQVVSDLRAKGEL</sequence>
<evidence type="ECO:0000255" key="1">
    <source>
        <dbReference type="HAMAP-Rule" id="MF_00373"/>
    </source>
</evidence>
<evidence type="ECO:0000305" key="2"/>